<evidence type="ECO:0000250" key="1">
    <source>
        <dbReference type="UniProtKB" id="Q7X9V3"/>
    </source>
</evidence>
<evidence type="ECO:0000250" key="2">
    <source>
        <dbReference type="UniProtKB" id="Q96F10"/>
    </source>
</evidence>
<evidence type="ECO:0000255" key="3">
    <source>
        <dbReference type="PROSITE-ProRule" id="PRU00532"/>
    </source>
</evidence>
<evidence type="ECO:0000269" key="4">
    <source>
    </source>
</evidence>
<evidence type="ECO:0000303" key="5">
    <source>
    </source>
</evidence>
<evidence type="ECO:0000305" key="6"/>
<evidence type="ECO:0000312" key="7">
    <source>
        <dbReference type="Araport" id="AT2G04845"/>
    </source>
</evidence>
<evidence type="ECO:0000312" key="8">
    <source>
        <dbReference type="EMBL" id="AAM15335.1"/>
    </source>
</evidence>
<evidence type="ECO:0007829" key="9">
    <source>
        <dbReference type="PDB" id="7OVU"/>
    </source>
</evidence>
<reference key="1">
    <citation type="journal article" date="1999" name="Nature">
        <title>Sequence and analysis of chromosome 2 of the plant Arabidopsis thaliana.</title>
        <authorList>
            <person name="Lin X."/>
            <person name="Kaul S."/>
            <person name="Rounsley S.D."/>
            <person name="Shea T.P."/>
            <person name="Benito M.-I."/>
            <person name="Town C.D."/>
            <person name="Fujii C.Y."/>
            <person name="Mason T.M."/>
            <person name="Bowman C.L."/>
            <person name="Barnstead M.E."/>
            <person name="Feldblyum T.V."/>
            <person name="Buell C.R."/>
            <person name="Ketchum K.A."/>
            <person name="Lee J.J."/>
            <person name="Ronning C.M."/>
            <person name="Koo H.L."/>
            <person name="Moffat K.S."/>
            <person name="Cronin L.A."/>
            <person name="Shen M."/>
            <person name="Pai G."/>
            <person name="Van Aken S."/>
            <person name="Umayam L."/>
            <person name="Tallon L.J."/>
            <person name="Gill J.E."/>
            <person name="Adams M.D."/>
            <person name="Carrera A.J."/>
            <person name="Creasy T.H."/>
            <person name="Goodman H.M."/>
            <person name="Somerville C.R."/>
            <person name="Copenhaver G.P."/>
            <person name="Preuss D."/>
            <person name="Nierman W.C."/>
            <person name="White O."/>
            <person name="Eisen J.A."/>
            <person name="Salzberg S.L."/>
            <person name="Fraser C.M."/>
            <person name="Venter J.C."/>
        </authorList>
    </citation>
    <scope>NUCLEOTIDE SEQUENCE [LARGE SCALE GENOMIC DNA]</scope>
    <source>
        <strain>cv. Columbia</strain>
    </source>
</reference>
<reference key="2">
    <citation type="journal article" date="2017" name="Plant J.">
        <title>Araport11: a complete reannotation of the Arabidopsis thaliana reference genome.</title>
        <authorList>
            <person name="Cheng C.Y."/>
            <person name="Krishnakumar V."/>
            <person name="Chan A.P."/>
            <person name="Thibaud-Nissen F."/>
            <person name="Schobel S."/>
            <person name="Town C.D."/>
        </authorList>
    </citation>
    <scope>GENOME REANNOTATION</scope>
    <source>
        <strain>cv. Columbia</strain>
    </source>
</reference>
<reference key="3">
    <citation type="submission" date="2002-03" db="EMBL/GenBank/DDBJ databases">
        <title>Full-length cDNA from Arabidopsis thaliana.</title>
        <authorList>
            <person name="Brover V.V."/>
            <person name="Troukhan M.E."/>
            <person name="Alexandrov N.A."/>
            <person name="Lu Y.-P."/>
            <person name="Flavell R.B."/>
            <person name="Feldmann K.A."/>
        </authorList>
    </citation>
    <scope>NUCLEOTIDE SEQUENCE [LARGE SCALE MRNA]</scope>
</reference>
<reference key="4">
    <citation type="journal article" date="2020" name="Mol. Syst. Biol.">
        <title>Dual lysine and N-terminal acetyltransferases reveal the complexity underpinning protein acetylation.</title>
        <authorList>
            <person name="Bienvenut W.V."/>
            <person name="Bruenje A."/>
            <person name="Boyer J.-B."/>
            <person name="Muehlenbeck J.S."/>
            <person name="Bernal G."/>
            <person name="Lassowskat I."/>
            <person name="Dian C."/>
            <person name="Linster E."/>
            <person name="Dinh T.V."/>
            <person name="Koskela M.M."/>
            <person name="Jung V."/>
            <person name="Seidel J."/>
            <person name="Schyrba L.K."/>
            <person name="Ivanauskaite A."/>
            <person name="Eirich J."/>
            <person name="Hell R."/>
            <person name="Schwarzer D."/>
            <person name="Mulo P."/>
            <person name="Wirtz M."/>
            <person name="Meinnel T."/>
            <person name="Giglione C."/>
            <person name="Finkemeier I."/>
        </authorList>
    </citation>
    <scope>SUBCELLULAR LOCATION</scope>
    <scope>TISSUE SPECIFICITY</scope>
    <scope>GENE FAMILY</scope>
    <scope>NOMENCLATURE</scope>
    <source>
        <strain>cv. Columbia</strain>
    </source>
</reference>
<organism>
    <name type="scientific">Arabidopsis thaliana</name>
    <name type="common">Mouse-ear cress</name>
    <dbReference type="NCBI Taxonomy" id="3702"/>
    <lineage>
        <taxon>Eukaryota</taxon>
        <taxon>Viridiplantae</taxon>
        <taxon>Streptophyta</taxon>
        <taxon>Embryophyta</taxon>
        <taxon>Tracheophyta</taxon>
        <taxon>Spermatophyta</taxon>
        <taxon>Magnoliopsida</taxon>
        <taxon>eudicotyledons</taxon>
        <taxon>Gunneridae</taxon>
        <taxon>Pentapetalae</taxon>
        <taxon>rosids</taxon>
        <taxon>malvids</taxon>
        <taxon>Brassicales</taxon>
        <taxon>Brassicaceae</taxon>
        <taxon>Camelineae</taxon>
        <taxon>Arabidopsis</taxon>
    </lineage>
</organism>
<gene>
    <name evidence="5" type="primary">GNAT9</name>
    <name evidence="7" type="ordered locus">At2g04845</name>
    <name evidence="8" type="ORF">F28I8</name>
</gene>
<dbReference type="EC" id="2.3.1.48" evidence="1 3"/>
<dbReference type="EMBL" id="AC006955">
    <property type="protein sequence ID" value="AAM15335.1"/>
    <property type="molecule type" value="Genomic_DNA"/>
</dbReference>
<dbReference type="EMBL" id="CP002685">
    <property type="protein sequence ID" value="AEC05874.1"/>
    <property type="molecule type" value="Genomic_DNA"/>
</dbReference>
<dbReference type="EMBL" id="AY086164">
    <property type="protein sequence ID" value="AAM63369.1"/>
    <property type="status" value="ALT_INIT"/>
    <property type="molecule type" value="mRNA"/>
</dbReference>
<dbReference type="RefSeq" id="NP_565315.1">
    <property type="nucleotide sequence ID" value="NM_126516.3"/>
</dbReference>
<dbReference type="PDB" id="7OVU">
    <property type="method" value="X-ray"/>
    <property type="resolution" value="1.45 A"/>
    <property type="chains" value="A=1-218"/>
</dbReference>
<dbReference type="PDBsum" id="7OVU"/>
<dbReference type="SMR" id="Q8S8E7"/>
<dbReference type="FunCoup" id="Q8S8E7">
    <property type="interactions" value="3772"/>
</dbReference>
<dbReference type="IntAct" id="Q8S8E7">
    <property type="interactions" value="2"/>
</dbReference>
<dbReference type="STRING" id="3702.Q8S8E7"/>
<dbReference type="PaxDb" id="3702-AT2G04845.1"/>
<dbReference type="ProteomicsDB" id="178869"/>
<dbReference type="EnsemblPlants" id="AT2G04845.1">
    <property type="protein sequence ID" value="AT2G04845.1"/>
    <property type="gene ID" value="AT2G04845"/>
</dbReference>
<dbReference type="GeneID" id="815030"/>
<dbReference type="Gramene" id="AT2G04845.1">
    <property type="protein sequence ID" value="AT2G04845.1"/>
    <property type="gene ID" value="AT2G04845"/>
</dbReference>
<dbReference type="KEGG" id="ath:AT2G04845"/>
<dbReference type="Araport" id="AT2G04845"/>
<dbReference type="TAIR" id="AT2G04845"/>
<dbReference type="eggNOG" id="KOG4135">
    <property type="taxonomic scope" value="Eukaryota"/>
</dbReference>
<dbReference type="HOGENOM" id="CLU_073102_0_0_1"/>
<dbReference type="InParanoid" id="Q8S8E7"/>
<dbReference type="OMA" id="VPYMSGH"/>
<dbReference type="PRO" id="PR:Q8S8E7"/>
<dbReference type="Proteomes" id="UP000006548">
    <property type="component" value="Chromosome 2"/>
</dbReference>
<dbReference type="ExpressionAtlas" id="Q8S8E7">
    <property type="expression patterns" value="baseline and differential"/>
</dbReference>
<dbReference type="GO" id="GO:0005829">
    <property type="term" value="C:cytosol"/>
    <property type="evidence" value="ECO:0000314"/>
    <property type="project" value="TAIR"/>
</dbReference>
<dbReference type="GO" id="GO:0005634">
    <property type="term" value="C:nucleus"/>
    <property type="evidence" value="ECO:0007669"/>
    <property type="project" value="UniProtKB-SubCell"/>
</dbReference>
<dbReference type="GO" id="GO:0008080">
    <property type="term" value="F:N-acetyltransferase activity"/>
    <property type="evidence" value="ECO:0000314"/>
    <property type="project" value="TAIR"/>
</dbReference>
<dbReference type="FunFam" id="3.40.630.30:FF:000083">
    <property type="entry name" value="Acyl-CoA N-acyltransferases (NAT) superfamily protein"/>
    <property type="match status" value="1"/>
</dbReference>
<dbReference type="Gene3D" id="3.40.630.30">
    <property type="match status" value="1"/>
</dbReference>
<dbReference type="InterPro" id="IPR016181">
    <property type="entry name" value="Acyl_CoA_acyltransferase"/>
</dbReference>
<dbReference type="InterPro" id="IPR000182">
    <property type="entry name" value="GNAT_dom"/>
</dbReference>
<dbReference type="InterPro" id="IPR039135">
    <property type="entry name" value="NAT9-like"/>
</dbReference>
<dbReference type="PANTHER" id="PTHR13256:SF16">
    <property type="entry name" value="ALPHA_BETA-TUBULIN-N-ACETYLTRANSFERASE 9"/>
    <property type="match status" value="1"/>
</dbReference>
<dbReference type="PANTHER" id="PTHR13256">
    <property type="entry name" value="N-ACETYLTRANSFERASE 9"/>
    <property type="match status" value="1"/>
</dbReference>
<dbReference type="Pfam" id="PF13302">
    <property type="entry name" value="Acetyltransf_3"/>
    <property type="match status" value="1"/>
</dbReference>
<dbReference type="SUPFAM" id="SSF55729">
    <property type="entry name" value="Acyl-CoA N-acyltransferases (Nat)"/>
    <property type="match status" value="1"/>
</dbReference>
<dbReference type="PROSITE" id="PS51186">
    <property type="entry name" value="GNAT"/>
    <property type="match status" value="1"/>
</dbReference>
<proteinExistence type="evidence at protein level"/>
<comment type="function">
    <text evidence="1">Probable protein acetyltransferase with dual specificity triggering both N-alpha-acetylation (NTA) and epsilon-lysine acetylation (KA).</text>
</comment>
<comment type="catalytic activity">
    <reaction evidence="1">
        <text>an N-terminal L-alpha-aminoacyl-[protein] + acetyl-CoA = N-terminal N(alpha)-acetyl-L-alpha-aminoacyl-[protein] + CoA + H(+)</text>
        <dbReference type="Rhea" id="RHEA:21028"/>
        <dbReference type="Rhea" id="RHEA-COMP:10636"/>
        <dbReference type="Rhea" id="RHEA-COMP:15589"/>
        <dbReference type="ChEBI" id="CHEBI:15378"/>
        <dbReference type="ChEBI" id="CHEBI:57287"/>
        <dbReference type="ChEBI" id="CHEBI:57288"/>
        <dbReference type="ChEBI" id="CHEBI:78597"/>
        <dbReference type="ChEBI" id="CHEBI:78598"/>
    </reaction>
</comment>
<comment type="catalytic activity">
    <reaction evidence="1">
        <text>L-lysyl-[protein] + acetyl-CoA = N(6)-acetyl-L-lysyl-[protein] + CoA + H(+)</text>
        <dbReference type="Rhea" id="RHEA:45948"/>
        <dbReference type="Rhea" id="RHEA-COMP:9752"/>
        <dbReference type="Rhea" id="RHEA-COMP:10731"/>
        <dbReference type="ChEBI" id="CHEBI:15378"/>
        <dbReference type="ChEBI" id="CHEBI:29969"/>
        <dbReference type="ChEBI" id="CHEBI:57287"/>
        <dbReference type="ChEBI" id="CHEBI:57288"/>
        <dbReference type="ChEBI" id="CHEBI:61930"/>
        <dbReference type="EC" id="2.3.1.48"/>
    </reaction>
</comment>
<comment type="subunit">
    <text evidence="1">Oligomer.</text>
</comment>
<comment type="subcellular location">
    <subcellularLocation>
        <location evidence="4">Cytoplasm</location>
    </subcellularLocation>
    <subcellularLocation>
        <location evidence="4">Nucleus</location>
    </subcellularLocation>
</comment>
<comment type="tissue specificity">
    <text evidence="4">Expressed throughout the plant.</text>
</comment>
<comment type="similarity">
    <text evidence="6">Belongs to the acetyltransferase family. GNAT subfamily.</text>
</comment>
<comment type="sequence caution" evidence="6">
    <conflict type="erroneous initiation">
        <sequence resource="EMBL-CDS" id="AAM63369"/>
    </conflict>
    <text>Truncated N-terminus.</text>
</comment>
<protein>
    <recommendedName>
        <fullName evidence="5">GCN5-related N-acetyltransferase 9</fullName>
        <ecNumber evidence="1 3">2.3.1.48</ecNumber>
    </recommendedName>
</protein>
<sequence length="218" mass="24530">MVTRMATKVSLEGKRVVLVPYMAEHVPKYHQWMQDSALLEATGSEPLSLEQEYEMQLSWTQDPNKRTFIVLDKDFVKGDLAHGQPHVEAMTGDVNIYMNDVDDPKVAEVEIMIAEPRSRGKGLGKESVLIMMAYGVKNLEIHKFTAKIGESNTASLSLFRKLGFEESSYSGIFKEVTLEYPVTNLRREELLKLLDEVIRHTHSSNNPSDSLLSGEATA</sequence>
<name>GNAT9_ARATH</name>
<keyword id="KW-0002">3D-structure</keyword>
<keyword id="KW-0012">Acyltransferase</keyword>
<keyword id="KW-0963">Cytoplasm</keyword>
<keyword id="KW-0539">Nucleus</keyword>
<keyword id="KW-1185">Reference proteome</keyword>
<keyword id="KW-0808">Transferase</keyword>
<feature type="chain" id="PRO_0000457957" description="GCN5-related N-acetyltransferase 9">
    <location>
        <begin position="1"/>
        <end position="218"/>
    </location>
</feature>
<feature type="domain" description="N-acetyltransferase" evidence="3">
    <location>
        <begin position="36"/>
        <end position="183"/>
    </location>
</feature>
<feature type="binding site" evidence="2">
    <location>
        <begin position="112"/>
        <end position="114"/>
    </location>
    <ligand>
        <name>acetyl-CoA</name>
        <dbReference type="ChEBI" id="CHEBI:57288"/>
    </ligand>
</feature>
<feature type="binding site" evidence="2">
    <location>
        <begin position="120"/>
        <end position="125"/>
    </location>
    <ligand>
        <name>acetyl-CoA</name>
        <dbReference type="ChEBI" id="CHEBI:57288"/>
    </ligand>
</feature>
<feature type="binding site" evidence="2">
    <location>
        <begin position="152"/>
        <end position="154"/>
    </location>
    <ligand>
        <name>acetyl-CoA</name>
        <dbReference type="ChEBI" id="CHEBI:57288"/>
    </ligand>
</feature>
<feature type="binding site" evidence="2">
    <location>
        <position position="159"/>
    </location>
    <ligand>
        <name>acetyl-CoA</name>
        <dbReference type="ChEBI" id="CHEBI:57288"/>
    </ligand>
</feature>
<feature type="strand" evidence="9">
    <location>
        <begin position="9"/>
        <end position="12"/>
    </location>
</feature>
<feature type="strand" evidence="9">
    <location>
        <begin position="14"/>
        <end position="19"/>
    </location>
</feature>
<feature type="helix" evidence="9">
    <location>
        <begin position="23"/>
        <end position="25"/>
    </location>
</feature>
<feature type="helix" evidence="9">
    <location>
        <begin position="26"/>
        <end position="32"/>
    </location>
</feature>
<feature type="helix" evidence="9">
    <location>
        <begin position="36"/>
        <end position="41"/>
    </location>
</feature>
<feature type="helix" evidence="9">
    <location>
        <begin position="49"/>
        <end position="61"/>
    </location>
</feature>
<feature type="strand" evidence="9">
    <location>
        <begin position="65"/>
        <end position="72"/>
    </location>
</feature>
<feature type="helix" evidence="9">
    <location>
        <begin position="73"/>
        <end position="75"/>
    </location>
</feature>
<feature type="strand" evidence="9">
    <location>
        <begin position="80"/>
        <end position="82"/>
    </location>
</feature>
<feature type="helix" evidence="9">
    <location>
        <begin position="87"/>
        <end position="89"/>
    </location>
</feature>
<feature type="strand" evidence="9">
    <location>
        <begin position="90"/>
        <end position="97"/>
    </location>
</feature>
<feature type="strand" evidence="9">
    <location>
        <begin position="106"/>
        <end position="113"/>
    </location>
</feature>
<feature type="helix" evidence="9">
    <location>
        <begin position="116"/>
        <end position="118"/>
    </location>
</feature>
<feature type="helix" evidence="9">
    <location>
        <begin position="123"/>
        <end position="139"/>
    </location>
</feature>
<feature type="strand" evidence="9">
    <location>
        <begin position="143"/>
        <end position="149"/>
    </location>
</feature>
<feature type="helix" evidence="9">
    <location>
        <begin position="153"/>
        <end position="161"/>
    </location>
</feature>
<feature type="strand" evidence="9">
    <location>
        <begin position="165"/>
        <end position="170"/>
    </location>
</feature>
<feature type="turn" evidence="9">
    <location>
        <begin position="171"/>
        <end position="174"/>
    </location>
</feature>
<feature type="strand" evidence="9">
    <location>
        <begin position="175"/>
        <end position="181"/>
    </location>
</feature>
<feature type="helix" evidence="9">
    <location>
        <begin position="184"/>
        <end position="195"/>
    </location>
</feature>
<feature type="strand" evidence="9">
    <location>
        <begin position="197"/>
        <end position="201"/>
    </location>
</feature>
<accession>Q8S8E7</accession>
<accession>Q8LD75</accession>